<dbReference type="EC" id="6.3.2.1" evidence="1"/>
<dbReference type="EMBL" id="CP000644">
    <property type="protein sequence ID" value="ABO88932.1"/>
    <property type="molecule type" value="Genomic_DNA"/>
</dbReference>
<dbReference type="RefSeq" id="WP_005313195.1">
    <property type="nucleotide sequence ID" value="NC_009348.1"/>
</dbReference>
<dbReference type="SMR" id="A4SJ60"/>
<dbReference type="STRING" id="29491.GCA_000820065_01709"/>
<dbReference type="KEGG" id="asa:ASA_0778"/>
<dbReference type="eggNOG" id="COG0414">
    <property type="taxonomic scope" value="Bacteria"/>
</dbReference>
<dbReference type="HOGENOM" id="CLU_047148_0_0_6"/>
<dbReference type="UniPathway" id="UPA00028">
    <property type="reaction ID" value="UER00005"/>
</dbReference>
<dbReference type="Proteomes" id="UP000000225">
    <property type="component" value="Chromosome"/>
</dbReference>
<dbReference type="GO" id="GO:0005829">
    <property type="term" value="C:cytosol"/>
    <property type="evidence" value="ECO:0007669"/>
    <property type="project" value="TreeGrafter"/>
</dbReference>
<dbReference type="GO" id="GO:0005524">
    <property type="term" value="F:ATP binding"/>
    <property type="evidence" value="ECO:0007669"/>
    <property type="project" value="UniProtKB-KW"/>
</dbReference>
<dbReference type="GO" id="GO:0004592">
    <property type="term" value="F:pantoate-beta-alanine ligase activity"/>
    <property type="evidence" value="ECO:0007669"/>
    <property type="project" value="UniProtKB-UniRule"/>
</dbReference>
<dbReference type="GO" id="GO:0015940">
    <property type="term" value="P:pantothenate biosynthetic process"/>
    <property type="evidence" value="ECO:0007669"/>
    <property type="project" value="UniProtKB-UniRule"/>
</dbReference>
<dbReference type="CDD" id="cd00560">
    <property type="entry name" value="PanC"/>
    <property type="match status" value="1"/>
</dbReference>
<dbReference type="FunFam" id="3.30.1300.10:FF:000001">
    <property type="entry name" value="Pantothenate synthetase"/>
    <property type="match status" value="1"/>
</dbReference>
<dbReference type="FunFam" id="3.40.50.620:FF:000013">
    <property type="entry name" value="Pantothenate synthetase"/>
    <property type="match status" value="1"/>
</dbReference>
<dbReference type="Gene3D" id="3.40.50.620">
    <property type="entry name" value="HUPs"/>
    <property type="match status" value="1"/>
</dbReference>
<dbReference type="Gene3D" id="3.30.1300.10">
    <property type="entry name" value="Pantoate-beta-alanine ligase, C-terminal domain"/>
    <property type="match status" value="1"/>
</dbReference>
<dbReference type="HAMAP" id="MF_00158">
    <property type="entry name" value="PanC"/>
    <property type="match status" value="1"/>
</dbReference>
<dbReference type="InterPro" id="IPR004821">
    <property type="entry name" value="Cyt_trans-like"/>
</dbReference>
<dbReference type="InterPro" id="IPR003721">
    <property type="entry name" value="Pantoate_ligase"/>
</dbReference>
<dbReference type="InterPro" id="IPR042176">
    <property type="entry name" value="Pantoate_ligase_C"/>
</dbReference>
<dbReference type="InterPro" id="IPR014729">
    <property type="entry name" value="Rossmann-like_a/b/a_fold"/>
</dbReference>
<dbReference type="NCBIfam" id="TIGR00125">
    <property type="entry name" value="cyt_tran_rel"/>
    <property type="match status" value="1"/>
</dbReference>
<dbReference type="NCBIfam" id="TIGR00018">
    <property type="entry name" value="panC"/>
    <property type="match status" value="1"/>
</dbReference>
<dbReference type="PANTHER" id="PTHR21299">
    <property type="entry name" value="CYTIDYLATE KINASE/PANTOATE-BETA-ALANINE LIGASE"/>
    <property type="match status" value="1"/>
</dbReference>
<dbReference type="PANTHER" id="PTHR21299:SF1">
    <property type="entry name" value="PANTOATE--BETA-ALANINE LIGASE"/>
    <property type="match status" value="1"/>
</dbReference>
<dbReference type="Pfam" id="PF02569">
    <property type="entry name" value="Pantoate_ligase"/>
    <property type="match status" value="1"/>
</dbReference>
<dbReference type="SUPFAM" id="SSF52374">
    <property type="entry name" value="Nucleotidylyl transferase"/>
    <property type="match status" value="1"/>
</dbReference>
<proteinExistence type="inferred from homology"/>
<sequence>MLVVNNPLVLREQISLWRREGRSIAFVPTMGNLHQGHLTLVEQARSHAEKVVVSIFVNPMQFDKAEDLANYPRTLEEDCAALNAAGVDLVFTPTPEIMYPQGLASQTFVEVPGLSGLLEGALRPGHFRGVSTVVTKLFNLVQPDVACFGQKDYQQLALIRKMVADMAMPIEIVGVPTVRAEDGLALSSRNGYLTTAERALAPELARTMNWIAEQIEGGDHHLPSLVAQASQRLDNAGFRTDAIDIVDATTLESATDKSRHLVILMAAYLGKARLIDNRVVMLSA</sequence>
<protein>
    <recommendedName>
        <fullName evidence="1">Pantothenate synthetase</fullName>
        <shortName evidence="1">PS</shortName>
        <ecNumber evidence="1">6.3.2.1</ecNumber>
    </recommendedName>
    <alternativeName>
        <fullName evidence="1">Pantoate--beta-alanine ligase</fullName>
    </alternativeName>
    <alternativeName>
        <fullName evidence="1">Pantoate-activating enzyme</fullName>
    </alternativeName>
</protein>
<accession>A4SJ60</accession>
<organism>
    <name type="scientific">Aeromonas salmonicida (strain A449)</name>
    <dbReference type="NCBI Taxonomy" id="382245"/>
    <lineage>
        <taxon>Bacteria</taxon>
        <taxon>Pseudomonadati</taxon>
        <taxon>Pseudomonadota</taxon>
        <taxon>Gammaproteobacteria</taxon>
        <taxon>Aeromonadales</taxon>
        <taxon>Aeromonadaceae</taxon>
        <taxon>Aeromonas</taxon>
    </lineage>
</organism>
<keyword id="KW-0067">ATP-binding</keyword>
<keyword id="KW-0963">Cytoplasm</keyword>
<keyword id="KW-0436">Ligase</keyword>
<keyword id="KW-0547">Nucleotide-binding</keyword>
<keyword id="KW-0566">Pantothenate biosynthesis</keyword>
<feature type="chain" id="PRO_0000305387" description="Pantothenate synthetase">
    <location>
        <begin position="1"/>
        <end position="284"/>
    </location>
</feature>
<feature type="active site" description="Proton donor" evidence="1">
    <location>
        <position position="37"/>
    </location>
</feature>
<feature type="binding site" evidence="1">
    <location>
        <begin position="30"/>
        <end position="37"/>
    </location>
    <ligand>
        <name>ATP</name>
        <dbReference type="ChEBI" id="CHEBI:30616"/>
    </ligand>
</feature>
<feature type="binding site" evidence="1">
    <location>
        <position position="61"/>
    </location>
    <ligand>
        <name>(R)-pantoate</name>
        <dbReference type="ChEBI" id="CHEBI:15980"/>
    </ligand>
</feature>
<feature type="binding site" evidence="1">
    <location>
        <position position="61"/>
    </location>
    <ligand>
        <name>beta-alanine</name>
        <dbReference type="ChEBI" id="CHEBI:57966"/>
    </ligand>
</feature>
<feature type="binding site" evidence="1">
    <location>
        <begin position="149"/>
        <end position="152"/>
    </location>
    <ligand>
        <name>ATP</name>
        <dbReference type="ChEBI" id="CHEBI:30616"/>
    </ligand>
</feature>
<feature type="binding site" evidence="1">
    <location>
        <position position="155"/>
    </location>
    <ligand>
        <name>(R)-pantoate</name>
        <dbReference type="ChEBI" id="CHEBI:15980"/>
    </ligand>
</feature>
<feature type="binding site" evidence="1">
    <location>
        <position position="178"/>
    </location>
    <ligand>
        <name>ATP</name>
        <dbReference type="ChEBI" id="CHEBI:30616"/>
    </ligand>
</feature>
<feature type="binding site" evidence="1">
    <location>
        <begin position="186"/>
        <end position="189"/>
    </location>
    <ligand>
        <name>ATP</name>
        <dbReference type="ChEBI" id="CHEBI:30616"/>
    </ligand>
</feature>
<gene>
    <name evidence="1" type="primary">panC</name>
    <name type="ordered locus">ASA_0778</name>
</gene>
<comment type="function">
    <text evidence="1">Catalyzes the condensation of pantoate with beta-alanine in an ATP-dependent reaction via a pantoyl-adenylate intermediate.</text>
</comment>
<comment type="catalytic activity">
    <reaction evidence="1">
        <text>(R)-pantoate + beta-alanine + ATP = (R)-pantothenate + AMP + diphosphate + H(+)</text>
        <dbReference type="Rhea" id="RHEA:10912"/>
        <dbReference type="ChEBI" id="CHEBI:15378"/>
        <dbReference type="ChEBI" id="CHEBI:15980"/>
        <dbReference type="ChEBI" id="CHEBI:29032"/>
        <dbReference type="ChEBI" id="CHEBI:30616"/>
        <dbReference type="ChEBI" id="CHEBI:33019"/>
        <dbReference type="ChEBI" id="CHEBI:57966"/>
        <dbReference type="ChEBI" id="CHEBI:456215"/>
        <dbReference type="EC" id="6.3.2.1"/>
    </reaction>
</comment>
<comment type="pathway">
    <text evidence="1">Cofactor biosynthesis; (R)-pantothenate biosynthesis; (R)-pantothenate from (R)-pantoate and beta-alanine: step 1/1.</text>
</comment>
<comment type="subunit">
    <text evidence="1">Homodimer.</text>
</comment>
<comment type="subcellular location">
    <subcellularLocation>
        <location evidence="1">Cytoplasm</location>
    </subcellularLocation>
</comment>
<comment type="miscellaneous">
    <text evidence="1">The reaction proceeds by a bi uni uni bi ping pong mechanism.</text>
</comment>
<comment type="similarity">
    <text evidence="1">Belongs to the pantothenate synthetase family.</text>
</comment>
<name>PANC_AERS4</name>
<evidence type="ECO:0000255" key="1">
    <source>
        <dbReference type="HAMAP-Rule" id="MF_00158"/>
    </source>
</evidence>
<reference key="1">
    <citation type="journal article" date="2008" name="BMC Genomics">
        <title>The genome of Aeromonas salmonicida subsp. salmonicida A449: insights into the evolution of a fish pathogen.</title>
        <authorList>
            <person name="Reith M.E."/>
            <person name="Singh R.K."/>
            <person name="Curtis B."/>
            <person name="Boyd J.M."/>
            <person name="Bouevitch A."/>
            <person name="Kimball J."/>
            <person name="Munholland J."/>
            <person name="Murphy C."/>
            <person name="Sarty D."/>
            <person name="Williams J."/>
            <person name="Nash J.H."/>
            <person name="Johnson S.C."/>
            <person name="Brown L.L."/>
        </authorList>
    </citation>
    <scope>NUCLEOTIDE SEQUENCE [LARGE SCALE GENOMIC DNA]</scope>
    <source>
        <strain>A449</strain>
    </source>
</reference>